<dbReference type="EMBL" id="AK020455">
    <property type="protein sequence ID" value="BAB32107.1"/>
    <property type="molecule type" value="mRNA"/>
</dbReference>
<dbReference type="EMBL" id="AK042690">
    <property type="protein sequence ID" value="BAC31334.1"/>
    <property type="molecule type" value="mRNA"/>
</dbReference>
<dbReference type="EMBL" id="AK079123">
    <property type="protein sequence ID" value="BAC37550.1"/>
    <property type="molecule type" value="mRNA"/>
</dbReference>
<dbReference type="EMBL" id="AL450399">
    <property type="status" value="NOT_ANNOTATED_CDS"/>
    <property type="molecule type" value="Genomic_DNA"/>
</dbReference>
<dbReference type="EMBL" id="BC138828">
    <property type="protein sequence ID" value="AAI38829.1"/>
    <property type="molecule type" value="mRNA"/>
</dbReference>
<dbReference type="EMBL" id="BC138829">
    <property type="protein sequence ID" value="AAI38830.1"/>
    <property type="molecule type" value="mRNA"/>
</dbReference>
<dbReference type="RefSeq" id="NP_084167.2">
    <property type="nucleotide sequence ID" value="NM_029891.2"/>
</dbReference>
<dbReference type="BioGRID" id="218599">
    <property type="interactions" value="7"/>
</dbReference>
<dbReference type="FunCoup" id="Q8BY02">
    <property type="interactions" value="3274"/>
</dbReference>
<dbReference type="IntAct" id="Q8BY02">
    <property type="interactions" value="2"/>
</dbReference>
<dbReference type="STRING" id="10090.ENSMUSP00000061546"/>
<dbReference type="PhosphoSitePlus" id="Q8BY02"/>
<dbReference type="PaxDb" id="10090-ENSMUSP00000061546"/>
<dbReference type="PeptideAtlas" id="Q8BY02"/>
<dbReference type="ProteomicsDB" id="293570"/>
<dbReference type="Pumba" id="Q8BY02"/>
<dbReference type="Antibodypedia" id="462">
    <property type="antibodies" value="211 antibodies from 31 providers"/>
</dbReference>
<dbReference type="DNASU" id="77286"/>
<dbReference type="Ensembl" id="ENSMUST00000057093.8">
    <property type="protein sequence ID" value="ENSMUSP00000061546.7"/>
    <property type="gene ID" value="ENSMUSG00000044149.8"/>
</dbReference>
<dbReference type="GeneID" id="77286"/>
<dbReference type="KEGG" id="mmu:77286"/>
<dbReference type="UCSC" id="uc009sxw.1">
    <property type="organism name" value="mouse"/>
</dbReference>
<dbReference type="AGR" id="MGI:1924536"/>
<dbReference type="CTD" id="55922"/>
<dbReference type="MGI" id="MGI:1924536">
    <property type="gene designation" value="Nkrf"/>
</dbReference>
<dbReference type="VEuPathDB" id="HostDB:ENSMUSG00000044149"/>
<dbReference type="eggNOG" id="KOG1721">
    <property type="taxonomic scope" value="Eukaryota"/>
</dbReference>
<dbReference type="GeneTree" id="ENSGT00940000157256"/>
<dbReference type="HOGENOM" id="CLU_025268_0_0_1"/>
<dbReference type="InParanoid" id="Q8BY02"/>
<dbReference type="OMA" id="SVLWTNH"/>
<dbReference type="PhylomeDB" id="Q8BY02"/>
<dbReference type="TreeFam" id="TF326321"/>
<dbReference type="BioGRID-ORCS" id="77286">
    <property type="hits" value="1 hit in 81 CRISPR screens"/>
</dbReference>
<dbReference type="ChiTaRS" id="Nkrf">
    <property type="organism name" value="mouse"/>
</dbReference>
<dbReference type="PRO" id="PR:Q8BY02"/>
<dbReference type="Proteomes" id="UP000000589">
    <property type="component" value="Chromosome X"/>
</dbReference>
<dbReference type="RNAct" id="Q8BY02">
    <property type="molecule type" value="protein"/>
</dbReference>
<dbReference type="Bgee" id="ENSMUSG00000044149">
    <property type="expression patterns" value="Expressed in pontine nuclear group and 226 other cell types or tissues"/>
</dbReference>
<dbReference type="ExpressionAtlas" id="Q8BY02">
    <property type="expression patterns" value="baseline and differential"/>
</dbReference>
<dbReference type="GO" id="GO:0005730">
    <property type="term" value="C:nucleolus"/>
    <property type="evidence" value="ECO:0007669"/>
    <property type="project" value="UniProtKB-SubCell"/>
</dbReference>
<dbReference type="GO" id="GO:0001671">
    <property type="term" value="F:ATPase activator activity"/>
    <property type="evidence" value="ECO:0000250"/>
    <property type="project" value="UniProtKB"/>
</dbReference>
<dbReference type="GO" id="GO:0003677">
    <property type="term" value="F:DNA binding"/>
    <property type="evidence" value="ECO:0007669"/>
    <property type="project" value="UniProtKB-KW"/>
</dbReference>
<dbReference type="CDD" id="cd02640">
    <property type="entry name" value="R3H_NRF"/>
    <property type="match status" value="1"/>
</dbReference>
<dbReference type="FunFam" id="3.30.1370.50:FF:000004">
    <property type="entry name" value="NFKB repressing factor"/>
    <property type="match status" value="1"/>
</dbReference>
<dbReference type="FunFam" id="3.30.160.20:FF:000030">
    <property type="entry name" value="NFKB repressing factor"/>
    <property type="match status" value="1"/>
</dbReference>
<dbReference type="FunFam" id="3.30.160.20:FF:000034">
    <property type="entry name" value="NFKB repressing factor"/>
    <property type="match status" value="1"/>
</dbReference>
<dbReference type="Gene3D" id="3.30.160.20">
    <property type="match status" value="2"/>
</dbReference>
<dbReference type="Gene3D" id="3.30.1370.50">
    <property type="entry name" value="R3H-like domain"/>
    <property type="match status" value="1"/>
</dbReference>
<dbReference type="InterPro" id="IPR000467">
    <property type="entry name" value="G_patch_dom"/>
</dbReference>
<dbReference type="InterPro" id="IPR001374">
    <property type="entry name" value="R3H_dom"/>
</dbReference>
<dbReference type="InterPro" id="IPR036867">
    <property type="entry name" value="R3H_dom_sf"/>
</dbReference>
<dbReference type="InterPro" id="IPR034071">
    <property type="entry name" value="R3H_NRF"/>
</dbReference>
<dbReference type="PANTHER" id="PTHR16148:SF15">
    <property type="entry name" value="NF-KAPPA-B-REPRESSING FACTOR"/>
    <property type="match status" value="1"/>
</dbReference>
<dbReference type="PANTHER" id="PTHR16148">
    <property type="entry name" value="NF-KAPPA-B-REPRESSING FACTOR-RELATED"/>
    <property type="match status" value="1"/>
</dbReference>
<dbReference type="Pfam" id="PF01585">
    <property type="entry name" value="G-patch"/>
    <property type="match status" value="1"/>
</dbReference>
<dbReference type="Pfam" id="PF01424">
    <property type="entry name" value="R3H"/>
    <property type="match status" value="1"/>
</dbReference>
<dbReference type="SMART" id="SM00443">
    <property type="entry name" value="G_patch"/>
    <property type="match status" value="1"/>
</dbReference>
<dbReference type="SMART" id="SM00393">
    <property type="entry name" value="R3H"/>
    <property type="match status" value="1"/>
</dbReference>
<dbReference type="SUPFAM" id="SSF54768">
    <property type="entry name" value="dsRNA-binding domain-like"/>
    <property type="match status" value="2"/>
</dbReference>
<dbReference type="SUPFAM" id="SSF82708">
    <property type="entry name" value="R3H domain"/>
    <property type="match status" value="1"/>
</dbReference>
<dbReference type="PROSITE" id="PS50174">
    <property type="entry name" value="G_PATCH"/>
    <property type="match status" value="1"/>
</dbReference>
<dbReference type="PROSITE" id="PS51061">
    <property type="entry name" value="R3H"/>
    <property type="match status" value="1"/>
</dbReference>
<gene>
    <name type="primary">Nkrf</name>
    <name type="synonym">Nrf</name>
</gene>
<protein>
    <recommendedName>
        <fullName>NF-kappa-B-repressing factor</fullName>
        <shortName>NFkB-repressing factor</shortName>
    </recommendedName>
    <alternativeName>
        <fullName>Transcription factor NRF</fullName>
    </alternativeName>
</protein>
<sequence length="690" mass="77739">MEKILHMAEGIDIGEMPSYDLMLPKPSKGQKRYLSTYDGQNPPKKQAGSKFHVRARFEPVHFVASSSKAERQEDPYGPQTKDVNGRTHFASMPRNFYQDYTQDSFSIQDGNSQYCNSSGFIFTKDQPVATNMYFDSGNPAPSSTSQQANCQPAPEPPPSQMYPESLVAEKQYFIEKLTATIWKNLSNPEMTSGSDKINYTYMLTRCIQACKTNPEYIYAPLKEIPPADIPKNKKLLTDGYACEVRCQNIYLTTGYAGSKNGSRDRATELAVKLLQKRIEVRVVRRKFKHIIGEDLVVCQIGMLSYEFPPALKPPEDLVVLGKDASGQPIFNSSAKHWTNFVITENANDAIGILNNSASFNKMSIEYKYEMMPNRTWRCRVFLQDHCLAEGYGTKKTSKHAAADEALKVLQKTQPTYPSVKSSQCHSGSSPKGSGKKKDIKDLVVYENSSNPVCTLNDTAQFNRMTVEYVYERMTGLRWKCKVILESEVIAEAVGVKKSVKYEAAGEAVKTLKKTQPTVINNLKKGTVEDVISRNEIQGRSAEEAYKQQIKEDNIGNQLLRKMGWTGGGLGKSGEGIREPISVKEQHKREGLGLDVERVNKIAKRDIEQIIRNYARSESHSDLTFSTELTNDERKQIHQIAQKYGLKSKSHGVGHDRYLVVGRKRRKEDLLDQLKQEGQVGHYELVMPQAN</sequence>
<proteinExistence type="evidence at transcript level"/>
<name>NKRF_MOUSE</name>
<evidence type="ECO:0000250" key="1">
    <source>
        <dbReference type="UniProtKB" id="O15226"/>
    </source>
</evidence>
<evidence type="ECO:0000255" key="2">
    <source>
        <dbReference type="PROSITE-ProRule" id="PRU00092"/>
    </source>
</evidence>
<evidence type="ECO:0000255" key="3">
    <source>
        <dbReference type="PROSITE-ProRule" id="PRU00382"/>
    </source>
</evidence>
<evidence type="ECO:0000256" key="4">
    <source>
        <dbReference type="SAM" id="MobiDB-lite"/>
    </source>
</evidence>
<evidence type="ECO:0000305" key="5"/>
<comment type="function">
    <text evidence="1">Enhances the ATPase activity of DHX15 by acting like a brace that tethers mobile sections of DHX15 together, stabilizing a functional conformation with high RNA affinity of DHX15. Involved in the constitutive silencing of the interferon beta promoter, independently of the virus-induced signals, and in the inhibition of the basal and cytokine-induced iNOS promoter activity. Also involved in the regulation of IL-8 transcription. May also act as a DNA-binding transcription regulator: interacts with a specific negative regulatory element (NRE) 5'-AATTCCTCTGA-3' to mediate transcriptional repression of certain NK-kappa-B responsive genes.</text>
</comment>
<comment type="subunit">
    <text evidence="1">Interacts with NF-kappa-B. Interacts with XRN2. Interacts (via G-patch domain) with DHX15; promoting the RNA helicase activity of DHX15.</text>
</comment>
<comment type="subcellular location">
    <subcellularLocation>
        <location evidence="1">Nucleus</location>
        <location evidence="1">Nucleolus</location>
    </subcellularLocation>
</comment>
<keyword id="KW-0238">DNA-binding</keyword>
<keyword id="KW-1017">Isopeptide bond</keyword>
<keyword id="KW-0539">Nucleus</keyword>
<keyword id="KW-0597">Phosphoprotein</keyword>
<keyword id="KW-1185">Reference proteome</keyword>
<keyword id="KW-0678">Repressor</keyword>
<keyword id="KW-0804">Transcription</keyword>
<keyword id="KW-0805">Transcription regulation</keyword>
<keyword id="KW-0832">Ubl conjugation</keyword>
<feature type="chain" id="PRO_0000096870" description="NF-kappa-B-repressing factor">
    <location>
        <begin position="1"/>
        <end position="690"/>
    </location>
</feature>
<feature type="domain" description="G-patch" evidence="2">
    <location>
        <begin position="551"/>
        <end position="596"/>
    </location>
</feature>
<feature type="domain" description="R3H" evidence="3">
    <location>
        <begin position="600"/>
        <end position="664"/>
    </location>
</feature>
<feature type="DNA-binding region" evidence="1">
    <location>
        <begin position="296"/>
        <end position="388"/>
    </location>
</feature>
<feature type="region of interest" description="Active repression domain" evidence="1">
    <location>
        <begin position="1"/>
        <end position="296"/>
    </location>
</feature>
<feature type="region of interest" description="Disordered" evidence="4">
    <location>
        <begin position="27"/>
        <end position="49"/>
    </location>
</feature>
<feature type="region of interest" description="Disordered" evidence="4">
    <location>
        <begin position="65"/>
        <end position="85"/>
    </location>
</feature>
<feature type="region of interest" description="Disordered" evidence="4">
    <location>
        <begin position="133"/>
        <end position="160"/>
    </location>
</feature>
<feature type="region of interest" description="Disordered" evidence="4">
    <location>
        <begin position="414"/>
        <end position="436"/>
    </location>
</feature>
<feature type="short sequence motif" description="Nuclear localization signal" evidence="1">
    <location>
        <begin position="25"/>
        <end position="45"/>
    </location>
</feature>
<feature type="compositionally biased region" description="Polar residues" evidence="4">
    <location>
        <begin position="139"/>
        <end position="150"/>
    </location>
</feature>
<feature type="compositionally biased region" description="Polar residues" evidence="4">
    <location>
        <begin position="414"/>
        <end position="425"/>
    </location>
</feature>
<feature type="modified residue" description="Phosphoserine" evidence="1">
    <location>
        <position position="618"/>
    </location>
</feature>
<feature type="cross-link" description="Glycyl lysine isopeptide (Lys-Gly) (interchain with G-Cter in SUMO2)" evidence="1">
    <location>
        <position position="68"/>
    </location>
</feature>
<feature type="cross-link" description="Glycyl lysine isopeptide (Lys-Gly) (interchain with G-Cter in SUMO2)" evidence="1">
    <location>
        <position position="500"/>
    </location>
</feature>
<feature type="cross-link" description="Glycyl lysine isopeptide (Lys-Gly) (interchain with G-Cter in SUMO2)" evidence="1">
    <location>
        <position position="666"/>
    </location>
</feature>
<feature type="cross-link" description="Glycyl lysine isopeptide (Lys-Gly) (interchain with G-Cter in SUMO2)" evidence="1">
    <location>
        <position position="674"/>
    </location>
</feature>
<feature type="sequence conflict" description="In Ref. 1; BAC37550." evidence="5" ref="1">
    <original>M</original>
    <variation>V</variation>
    <location>
        <position position="686"/>
    </location>
</feature>
<reference key="1">
    <citation type="journal article" date="2005" name="Science">
        <title>The transcriptional landscape of the mammalian genome.</title>
        <authorList>
            <person name="Carninci P."/>
            <person name="Kasukawa T."/>
            <person name="Katayama S."/>
            <person name="Gough J."/>
            <person name="Frith M.C."/>
            <person name="Maeda N."/>
            <person name="Oyama R."/>
            <person name="Ravasi T."/>
            <person name="Lenhard B."/>
            <person name="Wells C."/>
            <person name="Kodzius R."/>
            <person name="Shimokawa K."/>
            <person name="Bajic V.B."/>
            <person name="Brenner S.E."/>
            <person name="Batalov S."/>
            <person name="Forrest A.R."/>
            <person name="Zavolan M."/>
            <person name="Davis M.J."/>
            <person name="Wilming L.G."/>
            <person name="Aidinis V."/>
            <person name="Allen J.E."/>
            <person name="Ambesi-Impiombato A."/>
            <person name="Apweiler R."/>
            <person name="Aturaliya R.N."/>
            <person name="Bailey T.L."/>
            <person name="Bansal M."/>
            <person name="Baxter L."/>
            <person name="Beisel K.W."/>
            <person name="Bersano T."/>
            <person name="Bono H."/>
            <person name="Chalk A.M."/>
            <person name="Chiu K.P."/>
            <person name="Choudhary V."/>
            <person name="Christoffels A."/>
            <person name="Clutterbuck D.R."/>
            <person name="Crowe M.L."/>
            <person name="Dalla E."/>
            <person name="Dalrymple B.P."/>
            <person name="de Bono B."/>
            <person name="Della Gatta G."/>
            <person name="di Bernardo D."/>
            <person name="Down T."/>
            <person name="Engstrom P."/>
            <person name="Fagiolini M."/>
            <person name="Faulkner G."/>
            <person name="Fletcher C.F."/>
            <person name="Fukushima T."/>
            <person name="Furuno M."/>
            <person name="Futaki S."/>
            <person name="Gariboldi M."/>
            <person name="Georgii-Hemming P."/>
            <person name="Gingeras T.R."/>
            <person name="Gojobori T."/>
            <person name="Green R.E."/>
            <person name="Gustincich S."/>
            <person name="Harbers M."/>
            <person name="Hayashi Y."/>
            <person name="Hensch T.K."/>
            <person name="Hirokawa N."/>
            <person name="Hill D."/>
            <person name="Huminiecki L."/>
            <person name="Iacono M."/>
            <person name="Ikeo K."/>
            <person name="Iwama A."/>
            <person name="Ishikawa T."/>
            <person name="Jakt M."/>
            <person name="Kanapin A."/>
            <person name="Katoh M."/>
            <person name="Kawasawa Y."/>
            <person name="Kelso J."/>
            <person name="Kitamura H."/>
            <person name="Kitano H."/>
            <person name="Kollias G."/>
            <person name="Krishnan S.P."/>
            <person name="Kruger A."/>
            <person name="Kummerfeld S.K."/>
            <person name="Kurochkin I.V."/>
            <person name="Lareau L.F."/>
            <person name="Lazarevic D."/>
            <person name="Lipovich L."/>
            <person name="Liu J."/>
            <person name="Liuni S."/>
            <person name="McWilliam S."/>
            <person name="Madan Babu M."/>
            <person name="Madera M."/>
            <person name="Marchionni L."/>
            <person name="Matsuda H."/>
            <person name="Matsuzawa S."/>
            <person name="Miki H."/>
            <person name="Mignone F."/>
            <person name="Miyake S."/>
            <person name="Morris K."/>
            <person name="Mottagui-Tabar S."/>
            <person name="Mulder N."/>
            <person name="Nakano N."/>
            <person name="Nakauchi H."/>
            <person name="Ng P."/>
            <person name="Nilsson R."/>
            <person name="Nishiguchi S."/>
            <person name="Nishikawa S."/>
            <person name="Nori F."/>
            <person name="Ohara O."/>
            <person name="Okazaki Y."/>
            <person name="Orlando V."/>
            <person name="Pang K.C."/>
            <person name="Pavan W.J."/>
            <person name="Pavesi G."/>
            <person name="Pesole G."/>
            <person name="Petrovsky N."/>
            <person name="Piazza S."/>
            <person name="Reed J."/>
            <person name="Reid J.F."/>
            <person name="Ring B.Z."/>
            <person name="Ringwald M."/>
            <person name="Rost B."/>
            <person name="Ruan Y."/>
            <person name="Salzberg S.L."/>
            <person name="Sandelin A."/>
            <person name="Schneider C."/>
            <person name="Schoenbach C."/>
            <person name="Sekiguchi K."/>
            <person name="Semple C.A."/>
            <person name="Seno S."/>
            <person name="Sessa L."/>
            <person name="Sheng Y."/>
            <person name="Shibata Y."/>
            <person name="Shimada H."/>
            <person name="Shimada K."/>
            <person name="Silva D."/>
            <person name="Sinclair B."/>
            <person name="Sperling S."/>
            <person name="Stupka E."/>
            <person name="Sugiura K."/>
            <person name="Sultana R."/>
            <person name="Takenaka Y."/>
            <person name="Taki K."/>
            <person name="Tammoja K."/>
            <person name="Tan S.L."/>
            <person name="Tang S."/>
            <person name="Taylor M.S."/>
            <person name="Tegner J."/>
            <person name="Teichmann S.A."/>
            <person name="Ueda H.R."/>
            <person name="van Nimwegen E."/>
            <person name="Verardo R."/>
            <person name="Wei C.L."/>
            <person name="Yagi K."/>
            <person name="Yamanishi H."/>
            <person name="Zabarovsky E."/>
            <person name="Zhu S."/>
            <person name="Zimmer A."/>
            <person name="Hide W."/>
            <person name="Bult C."/>
            <person name="Grimmond S.M."/>
            <person name="Teasdale R.D."/>
            <person name="Liu E.T."/>
            <person name="Brusic V."/>
            <person name="Quackenbush J."/>
            <person name="Wahlestedt C."/>
            <person name="Mattick J.S."/>
            <person name="Hume D.A."/>
            <person name="Kai C."/>
            <person name="Sasaki D."/>
            <person name="Tomaru Y."/>
            <person name="Fukuda S."/>
            <person name="Kanamori-Katayama M."/>
            <person name="Suzuki M."/>
            <person name="Aoki J."/>
            <person name="Arakawa T."/>
            <person name="Iida J."/>
            <person name="Imamura K."/>
            <person name="Itoh M."/>
            <person name="Kato T."/>
            <person name="Kawaji H."/>
            <person name="Kawagashira N."/>
            <person name="Kawashima T."/>
            <person name="Kojima M."/>
            <person name="Kondo S."/>
            <person name="Konno H."/>
            <person name="Nakano K."/>
            <person name="Ninomiya N."/>
            <person name="Nishio T."/>
            <person name="Okada M."/>
            <person name="Plessy C."/>
            <person name="Shibata K."/>
            <person name="Shiraki T."/>
            <person name="Suzuki S."/>
            <person name="Tagami M."/>
            <person name="Waki K."/>
            <person name="Watahiki A."/>
            <person name="Okamura-Oho Y."/>
            <person name="Suzuki H."/>
            <person name="Kawai J."/>
            <person name="Hayashizaki Y."/>
        </authorList>
    </citation>
    <scope>NUCLEOTIDE SEQUENCE [LARGE SCALE MRNA]</scope>
    <source>
        <strain>C57BL/6J</strain>
        <tissue>Cerebellum</tissue>
        <tissue>Embryo</tissue>
    </source>
</reference>
<reference key="2">
    <citation type="journal article" date="2009" name="PLoS Biol.">
        <title>Lineage-specific biology revealed by a finished genome assembly of the mouse.</title>
        <authorList>
            <person name="Church D.M."/>
            <person name="Goodstadt L."/>
            <person name="Hillier L.W."/>
            <person name="Zody M.C."/>
            <person name="Goldstein S."/>
            <person name="She X."/>
            <person name="Bult C.J."/>
            <person name="Agarwala R."/>
            <person name="Cherry J.L."/>
            <person name="DiCuccio M."/>
            <person name="Hlavina W."/>
            <person name="Kapustin Y."/>
            <person name="Meric P."/>
            <person name="Maglott D."/>
            <person name="Birtle Z."/>
            <person name="Marques A.C."/>
            <person name="Graves T."/>
            <person name="Zhou S."/>
            <person name="Teague B."/>
            <person name="Potamousis K."/>
            <person name="Churas C."/>
            <person name="Place M."/>
            <person name="Herschleb J."/>
            <person name="Runnheim R."/>
            <person name="Forrest D."/>
            <person name="Amos-Landgraf J."/>
            <person name="Schwartz D.C."/>
            <person name="Cheng Z."/>
            <person name="Lindblad-Toh K."/>
            <person name="Eichler E.E."/>
            <person name="Ponting C.P."/>
        </authorList>
    </citation>
    <scope>NUCLEOTIDE SEQUENCE [LARGE SCALE GENOMIC DNA]</scope>
    <source>
        <strain>C57BL/6J</strain>
    </source>
</reference>
<reference key="3">
    <citation type="journal article" date="2004" name="Genome Res.">
        <title>The status, quality, and expansion of the NIH full-length cDNA project: the Mammalian Gene Collection (MGC).</title>
        <authorList>
            <consortium name="The MGC Project Team"/>
        </authorList>
    </citation>
    <scope>NUCLEOTIDE SEQUENCE [LARGE SCALE MRNA]</scope>
    <source>
        <tissue>Embryo</tissue>
    </source>
</reference>
<organism>
    <name type="scientific">Mus musculus</name>
    <name type="common">Mouse</name>
    <dbReference type="NCBI Taxonomy" id="10090"/>
    <lineage>
        <taxon>Eukaryota</taxon>
        <taxon>Metazoa</taxon>
        <taxon>Chordata</taxon>
        <taxon>Craniata</taxon>
        <taxon>Vertebrata</taxon>
        <taxon>Euteleostomi</taxon>
        <taxon>Mammalia</taxon>
        <taxon>Eutheria</taxon>
        <taxon>Euarchontoglires</taxon>
        <taxon>Glires</taxon>
        <taxon>Rodentia</taxon>
        <taxon>Myomorpha</taxon>
        <taxon>Muroidea</taxon>
        <taxon>Muridae</taxon>
        <taxon>Murinae</taxon>
        <taxon>Mus</taxon>
        <taxon>Mus</taxon>
    </lineage>
</organism>
<accession>Q8BY02</accession>
<accession>A2A3V7</accession>
<accession>Q8BJU5</accession>
<accession>Q9CRL2</accession>